<dbReference type="EMBL" id="AF124490">
    <property type="protein sequence ID" value="AAD28046.1"/>
    <property type="molecule type" value="mRNA"/>
</dbReference>
<dbReference type="EMBL" id="AK294785">
    <property type="protein sequence ID" value="BAG57910.1"/>
    <property type="molecule type" value="mRNA"/>
</dbReference>
<dbReference type="EMBL" id="AK299932">
    <property type="protein sequence ID" value="BAG61765.1"/>
    <property type="molecule type" value="mRNA"/>
</dbReference>
<dbReference type="EMBL" id="AC104564">
    <property type="status" value="NOT_ANNOTATED_CDS"/>
    <property type="molecule type" value="Genomic_DNA"/>
</dbReference>
<dbReference type="EMBL" id="BC006227">
    <property type="protein sequence ID" value="AAH06227.2"/>
    <property type="molecule type" value="mRNA"/>
</dbReference>
<dbReference type="EMBL" id="BC048196">
    <property type="protein sequence ID" value="AAH48196.1"/>
    <property type="status" value="ALT_INIT"/>
    <property type="molecule type" value="mRNA"/>
</dbReference>
<dbReference type="CCDS" id="CCDS11250.1">
    <molecule id="Q9Y2X7-1"/>
</dbReference>
<dbReference type="CCDS" id="CCDS42290.1">
    <molecule id="Q9Y2X7-3"/>
</dbReference>
<dbReference type="RefSeq" id="NP_001078923.1">
    <molecule id="Q9Y2X7-3"/>
    <property type="nucleotide sequence ID" value="NM_001085454.2"/>
</dbReference>
<dbReference type="RefSeq" id="NP_054749.2">
    <molecule id="Q9Y2X7-1"/>
    <property type="nucleotide sequence ID" value="NM_014030.3"/>
</dbReference>
<dbReference type="SMR" id="Q9Y2X7"/>
<dbReference type="BioGRID" id="118789">
    <property type="interactions" value="155"/>
</dbReference>
<dbReference type="CORUM" id="Q9Y2X7"/>
<dbReference type="FunCoup" id="Q9Y2X7">
    <property type="interactions" value="1542"/>
</dbReference>
<dbReference type="IntAct" id="Q9Y2X7">
    <property type="interactions" value="87"/>
</dbReference>
<dbReference type="MINT" id="Q9Y2X7"/>
<dbReference type="STRING" id="9606.ENSP00000378338"/>
<dbReference type="GlyCosmos" id="Q9Y2X7">
    <property type="glycosylation" value="1 site, 1 glycan"/>
</dbReference>
<dbReference type="GlyGen" id="Q9Y2X7">
    <property type="glycosylation" value="5 sites, 1 N-linked glycan (1 site), 1 O-linked glycan (3 sites)"/>
</dbReference>
<dbReference type="iPTMnet" id="Q9Y2X7"/>
<dbReference type="PhosphoSitePlus" id="Q9Y2X7"/>
<dbReference type="SwissPalm" id="Q9Y2X7"/>
<dbReference type="BioMuta" id="GIT1"/>
<dbReference type="DMDM" id="45645212"/>
<dbReference type="jPOST" id="Q9Y2X7"/>
<dbReference type="MassIVE" id="Q9Y2X7"/>
<dbReference type="PaxDb" id="9606-ENSP00000378338"/>
<dbReference type="PeptideAtlas" id="Q9Y2X7"/>
<dbReference type="ProteomicsDB" id="85928">
    <molecule id="Q9Y2X7-1"/>
</dbReference>
<dbReference type="ProteomicsDB" id="85929">
    <molecule id="Q9Y2X7-2"/>
</dbReference>
<dbReference type="ProteomicsDB" id="85930">
    <molecule id="Q9Y2X7-3"/>
</dbReference>
<dbReference type="Pumba" id="Q9Y2X7"/>
<dbReference type="ABCD" id="Q9Y2X7">
    <property type="antibodies" value="1 sequenced antibody"/>
</dbReference>
<dbReference type="Antibodypedia" id="1365">
    <property type="antibodies" value="487 antibodies from 37 providers"/>
</dbReference>
<dbReference type="DNASU" id="28964"/>
<dbReference type="Ensembl" id="ENST00000225394.8">
    <molecule id="Q9Y2X7-1"/>
    <property type="protein sequence ID" value="ENSP00000225394.3"/>
    <property type="gene ID" value="ENSG00000108262.16"/>
</dbReference>
<dbReference type="Ensembl" id="ENST00000394869.7">
    <molecule id="Q9Y2X7-3"/>
    <property type="protein sequence ID" value="ENSP00000378338.3"/>
    <property type="gene ID" value="ENSG00000108262.16"/>
</dbReference>
<dbReference type="GeneID" id="28964"/>
<dbReference type="KEGG" id="hsa:28964"/>
<dbReference type="MANE-Select" id="ENST00000225394.8">
    <property type="protein sequence ID" value="ENSP00000225394.3"/>
    <property type="RefSeq nucleotide sequence ID" value="NM_014030.4"/>
    <property type="RefSeq protein sequence ID" value="NP_054749.2"/>
</dbReference>
<dbReference type="UCSC" id="uc002hef.3">
    <molecule id="Q9Y2X7-1"/>
    <property type="organism name" value="human"/>
</dbReference>
<dbReference type="AGR" id="HGNC:4272"/>
<dbReference type="CTD" id="28964"/>
<dbReference type="DisGeNET" id="28964"/>
<dbReference type="GeneCards" id="GIT1"/>
<dbReference type="HGNC" id="HGNC:4272">
    <property type="gene designation" value="GIT1"/>
</dbReference>
<dbReference type="HPA" id="ENSG00000108262">
    <property type="expression patterns" value="Tissue enhanced (brain)"/>
</dbReference>
<dbReference type="MalaCards" id="GIT1"/>
<dbReference type="MIM" id="608434">
    <property type="type" value="gene"/>
</dbReference>
<dbReference type="neXtProt" id="NX_Q9Y2X7"/>
<dbReference type="OpenTargets" id="ENSG00000108262"/>
<dbReference type="PharmGKB" id="PA28683"/>
<dbReference type="VEuPathDB" id="HostDB:ENSG00000108262"/>
<dbReference type="eggNOG" id="KOG0818">
    <property type="taxonomic scope" value="Eukaryota"/>
</dbReference>
<dbReference type="GeneTree" id="ENSGT00940000159604"/>
<dbReference type="InParanoid" id="Q9Y2X7"/>
<dbReference type="OMA" id="IDHKNGH"/>
<dbReference type="OrthoDB" id="5588096at2759"/>
<dbReference type="PAN-GO" id="Q9Y2X7">
    <property type="GO annotations" value="10 GO annotations based on evolutionary models"/>
</dbReference>
<dbReference type="PhylomeDB" id="Q9Y2X7"/>
<dbReference type="TreeFam" id="TF317762"/>
<dbReference type="PathwayCommons" id="Q9Y2X7"/>
<dbReference type="Reactome" id="R-HSA-3928664">
    <property type="pathway name" value="Ephrin signaling"/>
</dbReference>
<dbReference type="Reactome" id="R-HSA-9013148">
    <property type="pathway name" value="CDC42 GTPase cycle"/>
</dbReference>
<dbReference type="Reactome" id="R-HSA-9013149">
    <property type="pathway name" value="RAC1 GTPase cycle"/>
</dbReference>
<dbReference type="Reactome" id="R-HSA-9013404">
    <property type="pathway name" value="RAC2 GTPase cycle"/>
</dbReference>
<dbReference type="Reactome" id="R-HSA-9013406">
    <property type="pathway name" value="RHOQ GTPase cycle"/>
</dbReference>
<dbReference type="Reactome" id="R-HSA-9013409">
    <property type="pathway name" value="RHOJ GTPase cycle"/>
</dbReference>
<dbReference type="Reactome" id="R-HSA-9013420">
    <property type="pathway name" value="RHOU GTPase cycle"/>
</dbReference>
<dbReference type="Reactome" id="R-HSA-9013423">
    <property type="pathway name" value="RAC3 GTPase cycle"/>
</dbReference>
<dbReference type="Reactome" id="R-HSA-9013424">
    <property type="pathway name" value="RHOV GTPase cycle"/>
</dbReference>
<dbReference type="Reactome" id="R-HSA-9619229">
    <property type="pathway name" value="Activation of RAC1 downstream of NMDARs"/>
</dbReference>
<dbReference type="SignaLink" id="Q9Y2X7"/>
<dbReference type="SIGNOR" id="Q9Y2X7"/>
<dbReference type="BioGRID-ORCS" id="28964">
    <property type="hits" value="12 hits in 1155 CRISPR screens"/>
</dbReference>
<dbReference type="CD-CODE" id="8C2F96ED">
    <property type="entry name" value="Centrosome"/>
</dbReference>
<dbReference type="CD-CODE" id="F345034F">
    <property type="entry name" value="Signaling cluster"/>
</dbReference>
<dbReference type="CD-CODE" id="FB4E32DD">
    <property type="entry name" value="Presynaptic clusters and postsynaptic densities"/>
</dbReference>
<dbReference type="ChiTaRS" id="GIT1">
    <property type="organism name" value="human"/>
</dbReference>
<dbReference type="GeneWiki" id="GIT1"/>
<dbReference type="GenomeRNAi" id="28964"/>
<dbReference type="Pharos" id="Q9Y2X7">
    <property type="development level" value="Tbio"/>
</dbReference>
<dbReference type="PRO" id="PR:Q9Y2X7"/>
<dbReference type="Proteomes" id="UP000005640">
    <property type="component" value="Chromosome 17"/>
</dbReference>
<dbReference type="RNAct" id="Q9Y2X7">
    <property type="molecule type" value="protein"/>
</dbReference>
<dbReference type="Bgee" id="ENSG00000108262">
    <property type="expression patterns" value="Expressed in right frontal lobe and 205 other cell types or tissues"/>
</dbReference>
<dbReference type="ExpressionAtlas" id="Q9Y2X7">
    <property type="expression patterns" value="baseline and differential"/>
</dbReference>
<dbReference type="GO" id="GO:0044305">
    <property type="term" value="C:calyx of Held"/>
    <property type="evidence" value="ECO:0007669"/>
    <property type="project" value="Ensembl"/>
</dbReference>
<dbReference type="GO" id="GO:0005813">
    <property type="term" value="C:centrosome"/>
    <property type="evidence" value="ECO:0000314"/>
    <property type="project" value="UniProtKB"/>
</dbReference>
<dbReference type="GO" id="GO:0005829">
    <property type="term" value="C:cytosol"/>
    <property type="evidence" value="ECO:0000314"/>
    <property type="project" value="HPA"/>
</dbReference>
<dbReference type="GO" id="GO:0030425">
    <property type="term" value="C:dendrite"/>
    <property type="evidence" value="ECO:0007669"/>
    <property type="project" value="Ensembl"/>
</dbReference>
<dbReference type="GO" id="GO:0005768">
    <property type="term" value="C:endosome"/>
    <property type="evidence" value="ECO:0007669"/>
    <property type="project" value="Ensembl"/>
</dbReference>
<dbReference type="GO" id="GO:0060076">
    <property type="term" value="C:excitatory synapse"/>
    <property type="evidence" value="ECO:0007669"/>
    <property type="project" value="Ensembl"/>
</dbReference>
<dbReference type="GO" id="GO:0005925">
    <property type="term" value="C:focal adhesion"/>
    <property type="evidence" value="ECO:0000314"/>
    <property type="project" value="HPA"/>
</dbReference>
<dbReference type="GO" id="GO:0098982">
    <property type="term" value="C:GABA-ergic synapse"/>
    <property type="evidence" value="ECO:0007669"/>
    <property type="project" value="Ensembl"/>
</dbReference>
<dbReference type="GO" id="GO:0098978">
    <property type="term" value="C:glutamatergic synapse"/>
    <property type="evidence" value="ECO:0007669"/>
    <property type="project" value="Ensembl"/>
</dbReference>
<dbReference type="GO" id="GO:0030426">
    <property type="term" value="C:growth cone"/>
    <property type="evidence" value="ECO:0007669"/>
    <property type="project" value="Ensembl"/>
</dbReference>
<dbReference type="GO" id="GO:0060077">
    <property type="term" value="C:inhibitory synapse"/>
    <property type="evidence" value="ECO:0007669"/>
    <property type="project" value="Ensembl"/>
</dbReference>
<dbReference type="GO" id="GO:0030027">
    <property type="term" value="C:lamellipodium"/>
    <property type="evidence" value="ECO:0007669"/>
    <property type="project" value="UniProtKB-SubCell"/>
</dbReference>
<dbReference type="GO" id="GO:0016020">
    <property type="term" value="C:membrane"/>
    <property type="evidence" value="ECO:0007005"/>
    <property type="project" value="UniProtKB"/>
</dbReference>
<dbReference type="GO" id="GO:0005739">
    <property type="term" value="C:mitochondrion"/>
    <property type="evidence" value="ECO:0000314"/>
    <property type="project" value="HPA"/>
</dbReference>
<dbReference type="GO" id="GO:0097431">
    <property type="term" value="C:mitotic spindle pole"/>
    <property type="evidence" value="ECO:0000314"/>
    <property type="project" value="UniProtKB"/>
</dbReference>
<dbReference type="GO" id="GO:0043005">
    <property type="term" value="C:neuron projection"/>
    <property type="evidence" value="ECO:0000318"/>
    <property type="project" value="GO_Central"/>
</dbReference>
<dbReference type="GO" id="GO:0098794">
    <property type="term" value="C:postsynapse"/>
    <property type="evidence" value="ECO:0000250"/>
    <property type="project" value="UniProtKB"/>
</dbReference>
<dbReference type="GO" id="GO:0014069">
    <property type="term" value="C:postsynaptic density"/>
    <property type="evidence" value="ECO:0007669"/>
    <property type="project" value="UniProtKB-SubCell"/>
</dbReference>
<dbReference type="GO" id="GO:0045202">
    <property type="term" value="C:synapse"/>
    <property type="evidence" value="ECO:0000318"/>
    <property type="project" value="GO_Central"/>
</dbReference>
<dbReference type="GO" id="GO:0043015">
    <property type="term" value="F:gamma-tubulin binding"/>
    <property type="evidence" value="ECO:0000314"/>
    <property type="project" value="UniProtKB"/>
</dbReference>
<dbReference type="GO" id="GO:0005096">
    <property type="term" value="F:GTPase activator activity"/>
    <property type="evidence" value="ECO:0000318"/>
    <property type="project" value="GO_Central"/>
</dbReference>
<dbReference type="GO" id="GO:0042802">
    <property type="term" value="F:identical protein binding"/>
    <property type="evidence" value="ECO:0007669"/>
    <property type="project" value="Ensembl"/>
</dbReference>
<dbReference type="GO" id="GO:0019903">
    <property type="term" value="F:protein phosphatase binding"/>
    <property type="evidence" value="ECO:0007669"/>
    <property type="project" value="Ensembl"/>
</dbReference>
<dbReference type="GO" id="GO:1990782">
    <property type="term" value="F:protein tyrosine kinase binding"/>
    <property type="evidence" value="ECO:0007669"/>
    <property type="project" value="Ensembl"/>
</dbReference>
<dbReference type="GO" id="GO:0044877">
    <property type="term" value="F:protein-containing complex binding"/>
    <property type="evidence" value="ECO:0007669"/>
    <property type="project" value="Ensembl"/>
</dbReference>
<dbReference type="GO" id="GO:0097110">
    <property type="term" value="F:scaffold protein binding"/>
    <property type="evidence" value="ECO:0007669"/>
    <property type="project" value="Ensembl"/>
</dbReference>
<dbReference type="GO" id="GO:0031267">
    <property type="term" value="F:small GTPase binding"/>
    <property type="evidence" value="ECO:0000318"/>
    <property type="project" value="GO_Central"/>
</dbReference>
<dbReference type="GO" id="GO:0098879">
    <property type="term" value="F:structural constituent of postsynaptic specialization"/>
    <property type="evidence" value="ECO:0007669"/>
    <property type="project" value="Ensembl"/>
</dbReference>
<dbReference type="GO" id="GO:0008270">
    <property type="term" value="F:zinc ion binding"/>
    <property type="evidence" value="ECO:0007669"/>
    <property type="project" value="UniProtKB-KW"/>
</dbReference>
<dbReference type="GO" id="GO:0007420">
    <property type="term" value="P:brain development"/>
    <property type="evidence" value="ECO:0000318"/>
    <property type="project" value="GO_Central"/>
</dbReference>
<dbReference type="GO" id="GO:0045454">
    <property type="term" value="P:cell redox homeostasis"/>
    <property type="evidence" value="ECO:0000250"/>
    <property type="project" value="UniProtKB"/>
</dbReference>
<dbReference type="GO" id="GO:0071364">
    <property type="term" value="P:cellular response to epidermal growth factor stimulus"/>
    <property type="evidence" value="ECO:0007669"/>
    <property type="project" value="Ensembl"/>
</dbReference>
<dbReference type="GO" id="GO:0071222">
    <property type="term" value="P:cellular response to lipopolysaccharide"/>
    <property type="evidence" value="ECO:0000250"/>
    <property type="project" value="UniProtKB"/>
</dbReference>
<dbReference type="GO" id="GO:0060996">
    <property type="term" value="P:dendritic spine development"/>
    <property type="evidence" value="ECO:0007669"/>
    <property type="project" value="Ensembl"/>
</dbReference>
<dbReference type="GO" id="GO:0048013">
    <property type="term" value="P:ephrin receptor signaling pathway"/>
    <property type="evidence" value="ECO:0007669"/>
    <property type="project" value="Ensembl"/>
</dbReference>
<dbReference type="GO" id="GO:0001771">
    <property type="term" value="P:immunological synapse formation"/>
    <property type="evidence" value="ECO:0007669"/>
    <property type="project" value="Ensembl"/>
</dbReference>
<dbReference type="GO" id="GO:0001957">
    <property type="term" value="P:intramembranous ossification"/>
    <property type="evidence" value="ECO:0000250"/>
    <property type="project" value="UniProtKB"/>
</dbReference>
<dbReference type="GO" id="GO:0007626">
    <property type="term" value="P:locomotory behavior"/>
    <property type="evidence" value="ECO:0007669"/>
    <property type="project" value="Ensembl"/>
</dbReference>
<dbReference type="GO" id="GO:0061743">
    <property type="term" value="P:motor learning"/>
    <property type="evidence" value="ECO:0007669"/>
    <property type="project" value="Ensembl"/>
</dbReference>
<dbReference type="GO" id="GO:0032013">
    <property type="term" value="P:negative regulation of ARF protein signal transduction"/>
    <property type="evidence" value="ECO:0007669"/>
    <property type="project" value="Ensembl"/>
</dbReference>
<dbReference type="GO" id="GO:0045820">
    <property type="term" value="P:negative regulation of glycolytic process"/>
    <property type="evidence" value="ECO:0000250"/>
    <property type="project" value="UniProtKB"/>
</dbReference>
<dbReference type="GO" id="GO:0106015">
    <property type="term" value="P:negative regulation of inflammatory response to wounding"/>
    <property type="evidence" value="ECO:0000250"/>
    <property type="project" value="UniProtKB"/>
</dbReference>
<dbReference type="GO" id="GO:0032691">
    <property type="term" value="P:negative regulation of interleukin-1 beta production"/>
    <property type="evidence" value="ECO:0000250"/>
    <property type="project" value="UniProtKB"/>
</dbReference>
<dbReference type="GO" id="GO:0099645">
    <property type="term" value="P:neurotransmitter receptor localization to postsynaptic specialization membrane"/>
    <property type="evidence" value="ECO:0007669"/>
    <property type="project" value="Ensembl"/>
</dbReference>
<dbReference type="GO" id="GO:0090063">
    <property type="term" value="P:positive regulation of microtubule nucleation"/>
    <property type="evidence" value="ECO:0000315"/>
    <property type="project" value="UniProtKB"/>
</dbReference>
<dbReference type="GO" id="GO:2000646">
    <property type="term" value="P:positive regulation of receptor catabolic process"/>
    <property type="evidence" value="ECO:0007669"/>
    <property type="project" value="Ensembl"/>
</dbReference>
<dbReference type="GO" id="GO:0099171">
    <property type="term" value="P:presynaptic modulation of chemical synaptic transmission"/>
    <property type="evidence" value="ECO:0007669"/>
    <property type="project" value="Ensembl"/>
</dbReference>
<dbReference type="GO" id="GO:0032012">
    <property type="term" value="P:regulation of ARF protein signal transduction"/>
    <property type="evidence" value="ECO:0000318"/>
    <property type="project" value="GO_Central"/>
</dbReference>
<dbReference type="GO" id="GO:0032465">
    <property type="term" value="P:regulation of cytokinesis"/>
    <property type="evidence" value="ECO:0000314"/>
    <property type="project" value="UniProtKB"/>
</dbReference>
<dbReference type="GO" id="GO:0008277">
    <property type="term" value="P:regulation of G protein-coupled receptor signaling pathway"/>
    <property type="evidence" value="ECO:0000318"/>
    <property type="project" value="GO_Central"/>
</dbReference>
<dbReference type="GO" id="GO:2000300">
    <property type="term" value="P:regulation of synaptic vesicle exocytosis"/>
    <property type="evidence" value="ECO:0007669"/>
    <property type="project" value="Ensembl"/>
</dbReference>
<dbReference type="GO" id="GO:0036465">
    <property type="term" value="P:synaptic vesicle recycling"/>
    <property type="evidence" value="ECO:0000318"/>
    <property type="project" value="GO_Central"/>
</dbReference>
<dbReference type="CDD" id="cd08846">
    <property type="entry name" value="ArfGap_GIT1"/>
    <property type="match status" value="1"/>
</dbReference>
<dbReference type="FunFam" id="1.25.40.20:FF:000013">
    <property type="entry name" value="ARF GTPase-activating protein GIT1 isoform 1"/>
    <property type="match status" value="1"/>
</dbReference>
<dbReference type="FunFam" id="1.10.220.150:FF:000003">
    <property type="entry name" value="ARF GTPase-activating protein GIT2 isoform 1"/>
    <property type="match status" value="1"/>
</dbReference>
<dbReference type="FunFam" id="1.20.120.330:FF:000002">
    <property type="entry name" value="ARF GTPase-activating protein GIT2 isoform 1"/>
    <property type="match status" value="1"/>
</dbReference>
<dbReference type="FunFam" id="1.20.5.170:FF:000015">
    <property type="entry name" value="ARF GTPase-activating protein GIT2 isoform 1"/>
    <property type="match status" value="1"/>
</dbReference>
<dbReference type="Gene3D" id="1.20.5.170">
    <property type="match status" value="1"/>
</dbReference>
<dbReference type="Gene3D" id="1.25.40.20">
    <property type="entry name" value="Ankyrin repeat-containing domain"/>
    <property type="match status" value="1"/>
</dbReference>
<dbReference type="Gene3D" id="1.10.220.150">
    <property type="entry name" value="Arf GTPase activating protein"/>
    <property type="match status" value="1"/>
</dbReference>
<dbReference type="Gene3D" id="1.20.120.330">
    <property type="entry name" value="Nucleotidyltransferases domain 2"/>
    <property type="match status" value="1"/>
</dbReference>
<dbReference type="InterPro" id="IPR002110">
    <property type="entry name" value="Ankyrin_rpt"/>
</dbReference>
<dbReference type="InterPro" id="IPR036770">
    <property type="entry name" value="Ankyrin_rpt-contain_sf"/>
</dbReference>
<dbReference type="InterPro" id="IPR037278">
    <property type="entry name" value="ARFGAP/RecO"/>
</dbReference>
<dbReference type="InterPro" id="IPR001164">
    <property type="entry name" value="ArfGAP_dom"/>
</dbReference>
<dbReference type="InterPro" id="IPR038508">
    <property type="entry name" value="ArfGAP_dom_sf"/>
</dbReference>
<dbReference type="InterPro" id="IPR047161">
    <property type="entry name" value="GIT-like"/>
</dbReference>
<dbReference type="InterPro" id="IPR032352">
    <property type="entry name" value="GIT1/2_CC"/>
</dbReference>
<dbReference type="InterPro" id="IPR022018">
    <property type="entry name" value="GIT1_C"/>
</dbReference>
<dbReference type="InterPro" id="IPR013724">
    <property type="entry name" value="GIT_SHD"/>
</dbReference>
<dbReference type="PANTHER" id="PTHR46097:SF1">
    <property type="entry name" value="ARF GTPASE-ACTIVATING PROTEIN GIT1"/>
    <property type="match status" value="1"/>
</dbReference>
<dbReference type="PANTHER" id="PTHR46097">
    <property type="entry name" value="G PROTEIN-COUPLED RECEPTOR KINASE INTERACTING ARFGAP"/>
    <property type="match status" value="1"/>
</dbReference>
<dbReference type="Pfam" id="PF12796">
    <property type="entry name" value="Ank_2"/>
    <property type="match status" value="1"/>
</dbReference>
<dbReference type="Pfam" id="PF01412">
    <property type="entry name" value="ArfGap"/>
    <property type="match status" value="1"/>
</dbReference>
<dbReference type="Pfam" id="PF12205">
    <property type="entry name" value="GIT1_C"/>
    <property type="match status" value="1"/>
</dbReference>
<dbReference type="Pfam" id="PF16559">
    <property type="entry name" value="GIT_CC"/>
    <property type="match status" value="1"/>
</dbReference>
<dbReference type="Pfam" id="PF08518">
    <property type="entry name" value="GIT_SHD"/>
    <property type="match status" value="2"/>
</dbReference>
<dbReference type="PRINTS" id="PR00405">
    <property type="entry name" value="REVINTRACTNG"/>
</dbReference>
<dbReference type="SMART" id="SM00248">
    <property type="entry name" value="ANK"/>
    <property type="match status" value="3"/>
</dbReference>
<dbReference type="SMART" id="SM00105">
    <property type="entry name" value="ArfGap"/>
    <property type="match status" value="1"/>
</dbReference>
<dbReference type="SMART" id="SM00555">
    <property type="entry name" value="GIT"/>
    <property type="match status" value="2"/>
</dbReference>
<dbReference type="SUPFAM" id="SSF48403">
    <property type="entry name" value="Ankyrin repeat"/>
    <property type="match status" value="1"/>
</dbReference>
<dbReference type="SUPFAM" id="SSF57863">
    <property type="entry name" value="ArfGap/RecO-like zinc finger"/>
    <property type="match status" value="1"/>
</dbReference>
<dbReference type="PROSITE" id="PS50297">
    <property type="entry name" value="ANK_REP_REGION"/>
    <property type="match status" value="1"/>
</dbReference>
<dbReference type="PROSITE" id="PS50088">
    <property type="entry name" value="ANK_REPEAT"/>
    <property type="match status" value="1"/>
</dbReference>
<dbReference type="PROSITE" id="PS50115">
    <property type="entry name" value="ARFGAP"/>
    <property type="match status" value="1"/>
</dbReference>
<keyword id="KW-0025">Alternative splicing</keyword>
<keyword id="KW-0040">ANK repeat</keyword>
<keyword id="KW-0965">Cell junction</keyword>
<keyword id="KW-0966">Cell projection</keyword>
<keyword id="KW-0175">Coiled coil</keyword>
<keyword id="KW-0963">Cytoplasm</keyword>
<keyword id="KW-0206">Cytoskeleton</keyword>
<keyword id="KW-0343">GTPase activation</keyword>
<keyword id="KW-0479">Metal-binding</keyword>
<keyword id="KW-0597">Phosphoprotein</keyword>
<keyword id="KW-1267">Proteomics identification</keyword>
<keyword id="KW-1185">Reference proteome</keyword>
<keyword id="KW-0677">Repeat</keyword>
<keyword id="KW-0770">Synapse</keyword>
<keyword id="KW-0862">Zinc</keyword>
<keyword id="KW-0863">Zinc-finger</keyword>
<organism>
    <name type="scientific">Homo sapiens</name>
    <name type="common">Human</name>
    <dbReference type="NCBI Taxonomy" id="9606"/>
    <lineage>
        <taxon>Eukaryota</taxon>
        <taxon>Metazoa</taxon>
        <taxon>Chordata</taxon>
        <taxon>Craniata</taxon>
        <taxon>Vertebrata</taxon>
        <taxon>Euteleostomi</taxon>
        <taxon>Mammalia</taxon>
        <taxon>Eutheria</taxon>
        <taxon>Euarchontoglires</taxon>
        <taxon>Primates</taxon>
        <taxon>Haplorrhini</taxon>
        <taxon>Catarrhini</taxon>
        <taxon>Hominidae</taxon>
        <taxon>Homo</taxon>
    </lineage>
</organism>
<feature type="chain" id="PRO_0000074200" description="ARF GTPase-activating protein GIT1">
    <location>
        <begin position="1"/>
        <end position="761"/>
    </location>
</feature>
<feature type="domain" description="Arf-GAP" evidence="4">
    <location>
        <begin position="1"/>
        <end position="124"/>
    </location>
</feature>
<feature type="repeat" description="ANK 1">
    <location>
        <begin position="132"/>
        <end position="161"/>
    </location>
</feature>
<feature type="repeat" description="ANK 2">
    <location>
        <begin position="166"/>
        <end position="195"/>
    </location>
</feature>
<feature type="repeat" description="ANK 3">
    <location>
        <begin position="199"/>
        <end position="228"/>
    </location>
</feature>
<feature type="zinc finger region" description="C4-type" evidence="4">
    <location>
        <begin position="11"/>
        <end position="34"/>
    </location>
</feature>
<feature type="region of interest" description="Interaction with gamma-tubulin and localization to the centrosome" evidence="18">
    <location>
        <begin position="1"/>
        <end position="124"/>
    </location>
</feature>
<feature type="region of interest" description="Interaction with PCLO" evidence="2">
    <location>
        <begin position="245"/>
        <end position="365"/>
    </location>
</feature>
<feature type="region of interest" description="Interaction with PTK2/FAK1" evidence="2">
    <location>
        <begin position="253"/>
        <end position="415"/>
    </location>
</feature>
<feature type="region of interest" description="Interaction with ARHGEF7" evidence="2">
    <location>
        <begin position="254"/>
        <end position="367"/>
    </location>
</feature>
<feature type="region of interest" description="Disordered" evidence="5">
    <location>
        <begin position="354"/>
        <end position="416"/>
    </location>
</feature>
<feature type="region of interest" description="Interaction with NCK2 and GRIN3A" evidence="2">
    <location>
        <begin position="366"/>
        <end position="587"/>
    </location>
</feature>
<feature type="region of interest" description="Required for localization at synapses" evidence="12">
    <location>
        <begin position="366"/>
        <end position="587"/>
    </location>
</feature>
<feature type="region of interest" description="Interaction with MAPK1" evidence="1">
    <location>
        <begin position="411"/>
        <end position="466"/>
    </location>
</feature>
<feature type="region of interest" description="Interaction with IKBKG" evidence="19">
    <location>
        <begin position="420"/>
        <end position="620"/>
    </location>
</feature>
<feature type="region of interest" description="Disordered" evidence="5">
    <location>
        <begin position="471"/>
        <end position="501"/>
    </location>
</feature>
<feature type="region of interest" description="Disordered" evidence="5">
    <location>
        <begin position="572"/>
        <end position="606"/>
    </location>
</feature>
<feature type="region of interest" description="Interaction with PXN and TGFB1I1" evidence="2">
    <location>
        <begin position="637"/>
        <end position="761"/>
    </location>
</feature>
<feature type="coiled-coil region" evidence="3">
    <location>
        <begin position="440"/>
        <end position="474"/>
    </location>
</feature>
<feature type="compositionally biased region" description="Polar residues" evidence="5">
    <location>
        <begin position="357"/>
        <end position="374"/>
    </location>
</feature>
<feature type="compositionally biased region" description="Acidic residues" evidence="5">
    <location>
        <begin position="385"/>
        <end position="394"/>
    </location>
</feature>
<feature type="compositionally biased region" description="Pro residues" evidence="5">
    <location>
        <begin position="474"/>
        <end position="484"/>
    </location>
</feature>
<feature type="modified residue" description="Phosphotyrosine" evidence="1">
    <location>
        <position position="224"/>
    </location>
</feature>
<feature type="modified residue" description="Phosphoserine" evidence="1">
    <location>
        <position position="359"/>
    </location>
</feature>
<feature type="modified residue" description="Phosphoserine" evidence="28 29 31 32">
    <location>
        <position position="362"/>
    </location>
</feature>
<feature type="modified residue" description="Phosphothreonine" evidence="29 30 32">
    <location>
        <position position="364"/>
    </location>
</feature>
<feature type="modified residue" description="Phosphoserine" evidence="32">
    <location>
        <position position="370"/>
    </location>
</feature>
<feature type="modified residue" description="Phosphoserine" evidence="29">
    <location>
        <position position="375"/>
    </location>
</feature>
<feature type="modified residue" description="Phosphotyrosine" evidence="28 29">
    <location>
        <position position="383"/>
    </location>
</feature>
<feature type="modified residue" description="Phosphoserine" evidence="28 29 30">
    <location>
        <position position="385"/>
    </location>
</feature>
<feature type="modified residue" description="Phosphoserine" evidence="25 26 27 28 29 30 31 32 33">
    <location>
        <position position="388"/>
    </location>
</feature>
<feature type="modified residue" description="Phosphothreonine" evidence="28 29">
    <location>
        <position position="392"/>
    </location>
</feature>
<feature type="modified residue" description="Phosphoserine" evidence="28 29 30">
    <location>
        <position position="410"/>
    </location>
</feature>
<feature type="modified residue" description="Phosphoserine" evidence="1">
    <location>
        <position position="413"/>
    </location>
</feature>
<feature type="modified residue" description="Phosphoserine" evidence="1">
    <location>
        <position position="417"/>
    </location>
</feature>
<feature type="modified residue" description="Phosphothreonine" evidence="33">
    <location>
        <position position="480"/>
    </location>
</feature>
<feature type="modified residue" description="Phosphoserine" evidence="32">
    <location>
        <position position="498"/>
    </location>
</feature>
<feature type="modified residue" description="Phosphoserine" evidence="1">
    <location>
        <position position="536"/>
    </location>
</feature>
<feature type="modified residue" description="Phosphothreonine" evidence="1">
    <location>
        <position position="537"/>
    </location>
</feature>
<feature type="modified residue" description="Phosphotyrosine" evidence="29">
    <location>
        <position position="545"/>
    </location>
</feature>
<feature type="modified residue" description="Phosphotyrosine" evidence="24">
    <location>
        <position position="554"/>
    </location>
</feature>
<feature type="modified residue" description="Phosphoserine" evidence="1">
    <location>
        <position position="561"/>
    </location>
</feature>
<feature type="modified residue" description="Phosphoserine" evidence="2">
    <location>
        <position position="571"/>
    </location>
</feature>
<feature type="modified residue" description="Phosphoserine" evidence="25 26 28 29 32 33">
    <location>
        <position position="592"/>
    </location>
</feature>
<feature type="modified residue" description="Phosphoserine" evidence="28 29 32">
    <location>
        <position position="596"/>
    </location>
</feature>
<feature type="modified residue" description="Phosphothreonine" evidence="29">
    <location>
        <position position="601"/>
    </location>
</feature>
<feature type="modified residue" description="Phosphoserine" evidence="2">
    <location>
        <position position="630"/>
    </location>
</feature>
<feature type="splice variant" id="VSP_009666" description="In isoform 2." evidence="22">
    <original>SKQLHSSVRTGNLETCLRLLSLGAQANFFHPEKGTTPLHVAAK</original>
    <variation>TGHRSWATPDINPHPNRATGTSALSAATLPGSQVPWCPPLSSP</variation>
    <location>
        <begin position="134"/>
        <end position="176"/>
    </location>
</feature>
<feature type="splice variant" id="VSP_009667" description="In isoform 2." evidence="22">
    <location>
        <begin position="177"/>
        <end position="761"/>
    </location>
</feature>
<feature type="splice variant" id="VSP_040984" description="In isoform 3." evidence="20">
    <original>D</original>
    <variation>DRSRQKCMSQ</variation>
    <location>
        <position position="253"/>
    </location>
</feature>
<feature type="mutagenesis site" description="When transfected to cells, increased number of multinucleated cells." evidence="16">
    <original>R</original>
    <variation>A</variation>
    <location>
        <position position="39"/>
    </location>
</feature>
<feature type="sequence conflict" description="In Ref. 1; AAD28046." evidence="23" ref="1">
    <original>P</original>
    <variation>S</variation>
    <location>
        <position position="121"/>
    </location>
</feature>
<name>GIT1_HUMAN</name>
<evidence type="ECO:0000250" key="1">
    <source>
        <dbReference type="UniProtKB" id="Q68FF6"/>
    </source>
</evidence>
<evidence type="ECO:0000250" key="2">
    <source>
        <dbReference type="UniProtKB" id="Q9Z272"/>
    </source>
</evidence>
<evidence type="ECO:0000255" key="3"/>
<evidence type="ECO:0000255" key="4">
    <source>
        <dbReference type="PROSITE-ProRule" id="PRU00288"/>
    </source>
</evidence>
<evidence type="ECO:0000256" key="5">
    <source>
        <dbReference type="SAM" id="MobiDB-lite"/>
    </source>
</evidence>
<evidence type="ECO:0000269" key="6">
    <source>
    </source>
</evidence>
<evidence type="ECO:0000269" key="7">
    <source>
    </source>
</evidence>
<evidence type="ECO:0000269" key="8">
    <source>
    </source>
</evidence>
<evidence type="ECO:0000269" key="9">
    <source>
    </source>
</evidence>
<evidence type="ECO:0000269" key="10">
    <source>
    </source>
</evidence>
<evidence type="ECO:0000269" key="11">
    <source>
    </source>
</evidence>
<evidence type="ECO:0000269" key="12">
    <source>
    </source>
</evidence>
<evidence type="ECO:0000269" key="13">
    <source>
    </source>
</evidence>
<evidence type="ECO:0000269" key="14">
    <source>
    </source>
</evidence>
<evidence type="ECO:0000269" key="15">
    <source>
    </source>
</evidence>
<evidence type="ECO:0000269" key="16">
    <source>
    </source>
</evidence>
<evidence type="ECO:0000269" key="17">
    <source>
    </source>
</evidence>
<evidence type="ECO:0000269" key="18">
    <source>
    </source>
</evidence>
<evidence type="ECO:0000269" key="19">
    <source>
    </source>
</evidence>
<evidence type="ECO:0000303" key="20">
    <source>
    </source>
</evidence>
<evidence type="ECO:0000303" key="21">
    <source>
    </source>
</evidence>
<evidence type="ECO:0000303" key="22">
    <source>
    </source>
</evidence>
<evidence type="ECO:0000305" key="23"/>
<evidence type="ECO:0007744" key="24">
    <source>
    </source>
</evidence>
<evidence type="ECO:0007744" key="25">
    <source>
    </source>
</evidence>
<evidence type="ECO:0007744" key="26">
    <source>
    </source>
</evidence>
<evidence type="ECO:0007744" key="27">
    <source>
    </source>
</evidence>
<evidence type="ECO:0007744" key="28">
    <source>
    </source>
</evidence>
<evidence type="ECO:0007744" key="29">
    <source>
    </source>
</evidence>
<evidence type="ECO:0007744" key="30">
    <source>
    </source>
</evidence>
<evidence type="ECO:0007744" key="31">
    <source>
    </source>
</evidence>
<evidence type="ECO:0007744" key="32">
    <source>
    </source>
</evidence>
<evidence type="ECO:0007744" key="33">
    <source>
    </source>
</evidence>
<reference key="1">
    <citation type="journal article" date="2000" name="J. Biol. Chem.">
        <title>The GIT family of ADP-ribosylation factor GTPase-activating proteins. Functional diversity of GIT2 through alternative splicing.</title>
        <authorList>
            <person name="Premont R.T."/>
            <person name="Claing A."/>
            <person name="Vitale N."/>
            <person name="Perry S.J."/>
            <person name="Lefkowitz R.J."/>
        </authorList>
    </citation>
    <scope>NUCLEOTIDE SEQUENCE [MRNA] (ISOFORM 1)</scope>
    <scope>INTERACTION WITH ARHGEF7; PAK3 AND PXN</scope>
</reference>
<reference key="2">
    <citation type="journal article" date="2004" name="Nat. Genet.">
        <title>Complete sequencing and characterization of 21,243 full-length human cDNAs.</title>
        <authorList>
            <person name="Ota T."/>
            <person name="Suzuki Y."/>
            <person name="Nishikawa T."/>
            <person name="Otsuki T."/>
            <person name="Sugiyama T."/>
            <person name="Irie R."/>
            <person name="Wakamatsu A."/>
            <person name="Hayashi K."/>
            <person name="Sato H."/>
            <person name="Nagai K."/>
            <person name="Kimura K."/>
            <person name="Makita H."/>
            <person name="Sekine M."/>
            <person name="Obayashi M."/>
            <person name="Nishi T."/>
            <person name="Shibahara T."/>
            <person name="Tanaka T."/>
            <person name="Ishii S."/>
            <person name="Yamamoto J."/>
            <person name="Saito K."/>
            <person name="Kawai Y."/>
            <person name="Isono Y."/>
            <person name="Nakamura Y."/>
            <person name="Nagahari K."/>
            <person name="Murakami K."/>
            <person name="Yasuda T."/>
            <person name="Iwayanagi T."/>
            <person name="Wagatsuma M."/>
            <person name="Shiratori A."/>
            <person name="Sudo H."/>
            <person name="Hosoiri T."/>
            <person name="Kaku Y."/>
            <person name="Kodaira H."/>
            <person name="Kondo H."/>
            <person name="Sugawara M."/>
            <person name="Takahashi M."/>
            <person name="Kanda K."/>
            <person name="Yokoi T."/>
            <person name="Furuya T."/>
            <person name="Kikkawa E."/>
            <person name="Omura Y."/>
            <person name="Abe K."/>
            <person name="Kamihara K."/>
            <person name="Katsuta N."/>
            <person name="Sato K."/>
            <person name="Tanikawa M."/>
            <person name="Yamazaki M."/>
            <person name="Ninomiya K."/>
            <person name="Ishibashi T."/>
            <person name="Yamashita H."/>
            <person name="Murakawa K."/>
            <person name="Fujimori K."/>
            <person name="Tanai H."/>
            <person name="Kimata M."/>
            <person name="Watanabe M."/>
            <person name="Hiraoka S."/>
            <person name="Chiba Y."/>
            <person name="Ishida S."/>
            <person name="Ono Y."/>
            <person name="Takiguchi S."/>
            <person name="Watanabe S."/>
            <person name="Yosida M."/>
            <person name="Hotuta T."/>
            <person name="Kusano J."/>
            <person name="Kanehori K."/>
            <person name="Takahashi-Fujii A."/>
            <person name="Hara H."/>
            <person name="Tanase T.-O."/>
            <person name="Nomura Y."/>
            <person name="Togiya S."/>
            <person name="Komai F."/>
            <person name="Hara R."/>
            <person name="Takeuchi K."/>
            <person name="Arita M."/>
            <person name="Imose N."/>
            <person name="Musashino K."/>
            <person name="Yuuki H."/>
            <person name="Oshima A."/>
            <person name="Sasaki N."/>
            <person name="Aotsuka S."/>
            <person name="Yoshikawa Y."/>
            <person name="Matsunawa H."/>
            <person name="Ichihara T."/>
            <person name="Shiohata N."/>
            <person name="Sano S."/>
            <person name="Moriya S."/>
            <person name="Momiyama H."/>
            <person name="Satoh N."/>
            <person name="Takami S."/>
            <person name="Terashima Y."/>
            <person name="Suzuki O."/>
            <person name="Nakagawa S."/>
            <person name="Senoh A."/>
            <person name="Mizoguchi H."/>
            <person name="Goto Y."/>
            <person name="Shimizu F."/>
            <person name="Wakebe H."/>
            <person name="Hishigaki H."/>
            <person name="Watanabe T."/>
            <person name="Sugiyama A."/>
            <person name="Takemoto M."/>
            <person name="Kawakami B."/>
            <person name="Yamazaki M."/>
            <person name="Watanabe K."/>
            <person name="Kumagai A."/>
            <person name="Itakura S."/>
            <person name="Fukuzumi Y."/>
            <person name="Fujimori Y."/>
            <person name="Komiyama M."/>
            <person name="Tashiro H."/>
            <person name="Tanigami A."/>
            <person name="Fujiwara T."/>
            <person name="Ono T."/>
            <person name="Yamada K."/>
            <person name="Fujii Y."/>
            <person name="Ozaki K."/>
            <person name="Hirao M."/>
            <person name="Ohmori Y."/>
            <person name="Kawabata A."/>
            <person name="Hikiji T."/>
            <person name="Kobatake N."/>
            <person name="Inagaki H."/>
            <person name="Ikema Y."/>
            <person name="Okamoto S."/>
            <person name="Okitani R."/>
            <person name="Kawakami T."/>
            <person name="Noguchi S."/>
            <person name="Itoh T."/>
            <person name="Shigeta K."/>
            <person name="Senba T."/>
            <person name="Matsumura K."/>
            <person name="Nakajima Y."/>
            <person name="Mizuno T."/>
            <person name="Morinaga M."/>
            <person name="Sasaki M."/>
            <person name="Togashi T."/>
            <person name="Oyama M."/>
            <person name="Hata H."/>
            <person name="Watanabe M."/>
            <person name="Komatsu T."/>
            <person name="Mizushima-Sugano J."/>
            <person name="Satoh T."/>
            <person name="Shirai Y."/>
            <person name="Takahashi Y."/>
            <person name="Nakagawa K."/>
            <person name="Okumura K."/>
            <person name="Nagase T."/>
            <person name="Nomura N."/>
            <person name="Kikuchi H."/>
            <person name="Masuho Y."/>
            <person name="Yamashita R."/>
            <person name="Nakai K."/>
            <person name="Yada T."/>
            <person name="Nakamura Y."/>
            <person name="Ohara O."/>
            <person name="Isogai T."/>
            <person name="Sugano S."/>
        </authorList>
    </citation>
    <scope>NUCLEOTIDE SEQUENCE [LARGE SCALE MRNA] (ISOFORM 3)</scope>
    <source>
        <tissue>Brain</tissue>
    </source>
</reference>
<reference key="3">
    <citation type="journal article" date="2006" name="Nature">
        <title>DNA sequence of human chromosome 17 and analysis of rearrangement in the human lineage.</title>
        <authorList>
            <person name="Zody M.C."/>
            <person name="Garber M."/>
            <person name="Adams D.J."/>
            <person name="Sharpe T."/>
            <person name="Harrow J."/>
            <person name="Lupski J.R."/>
            <person name="Nicholson C."/>
            <person name="Searle S.M."/>
            <person name="Wilming L."/>
            <person name="Young S.K."/>
            <person name="Abouelleil A."/>
            <person name="Allen N.R."/>
            <person name="Bi W."/>
            <person name="Bloom T."/>
            <person name="Borowsky M.L."/>
            <person name="Bugalter B.E."/>
            <person name="Butler J."/>
            <person name="Chang J.L."/>
            <person name="Chen C.-K."/>
            <person name="Cook A."/>
            <person name="Corum B."/>
            <person name="Cuomo C.A."/>
            <person name="de Jong P.J."/>
            <person name="DeCaprio D."/>
            <person name="Dewar K."/>
            <person name="FitzGerald M."/>
            <person name="Gilbert J."/>
            <person name="Gibson R."/>
            <person name="Gnerre S."/>
            <person name="Goldstein S."/>
            <person name="Grafham D.V."/>
            <person name="Grocock R."/>
            <person name="Hafez N."/>
            <person name="Hagopian D.S."/>
            <person name="Hart E."/>
            <person name="Norman C.H."/>
            <person name="Humphray S."/>
            <person name="Jaffe D.B."/>
            <person name="Jones M."/>
            <person name="Kamal M."/>
            <person name="Khodiyar V.K."/>
            <person name="LaButti K."/>
            <person name="Laird G."/>
            <person name="Lehoczky J."/>
            <person name="Liu X."/>
            <person name="Lokyitsang T."/>
            <person name="Loveland J."/>
            <person name="Lui A."/>
            <person name="Macdonald P."/>
            <person name="Major J.E."/>
            <person name="Matthews L."/>
            <person name="Mauceli E."/>
            <person name="McCarroll S.A."/>
            <person name="Mihalev A.H."/>
            <person name="Mudge J."/>
            <person name="Nguyen C."/>
            <person name="Nicol R."/>
            <person name="O'Leary S.B."/>
            <person name="Osoegawa K."/>
            <person name="Schwartz D.C."/>
            <person name="Shaw-Smith C."/>
            <person name="Stankiewicz P."/>
            <person name="Steward C."/>
            <person name="Swarbreck D."/>
            <person name="Venkataraman V."/>
            <person name="Whittaker C.A."/>
            <person name="Yang X."/>
            <person name="Zimmer A.R."/>
            <person name="Bradley A."/>
            <person name="Hubbard T."/>
            <person name="Birren B.W."/>
            <person name="Rogers J."/>
            <person name="Lander E.S."/>
            <person name="Nusbaum C."/>
        </authorList>
    </citation>
    <scope>NUCLEOTIDE SEQUENCE [LARGE SCALE GENOMIC DNA]</scope>
</reference>
<reference key="4">
    <citation type="journal article" date="2004" name="Genome Res.">
        <title>The status, quality, and expansion of the NIH full-length cDNA project: the Mammalian Gene Collection (MGC).</title>
        <authorList>
            <consortium name="The MGC Project Team"/>
        </authorList>
    </citation>
    <scope>NUCLEOTIDE SEQUENCE [LARGE SCALE MRNA] (ISOFORM 2)</scope>
    <scope>NUCLEOTIDE SEQUENCE [LARGE SCALE MRNA] OF 585-761 (ISOFORM 1)</scope>
    <source>
        <tissue>Lung</tissue>
        <tissue>Melanoma</tissue>
    </source>
</reference>
<reference key="5">
    <citation type="journal article" date="2000" name="Mol. Cell. Biol.">
        <title>Coupling of PAK-interacting exchange factor PIX to GIT1 promotes focal complex disassembly.</title>
        <authorList>
            <person name="Zhao Z.-S."/>
            <person name="Manser E."/>
            <person name="Loo T.-H."/>
            <person name="Lim L."/>
        </authorList>
    </citation>
    <scope>FUNCTION</scope>
    <scope>INTERACTION WITH PXN</scope>
    <scope>SUBCELLULAR LOCATION</scope>
</reference>
<reference key="6">
    <citation type="journal article" date="2002" name="J. Biochem.">
        <title>Hic-5 interacts with GIT1 with a different binding mode from paxillin.</title>
        <authorList>
            <person name="Nishiya N."/>
            <person name="Shirai T."/>
            <person name="Suzuki W."/>
            <person name="Nose K."/>
        </authorList>
    </citation>
    <scope>INTERACTION WITH TGFB1I1</scope>
</reference>
<reference key="7">
    <citation type="journal article" date="2002" name="J. Cell Sci.">
        <title>GIT1 functions in a motile, multi-molecular signaling complex that regulates protrusive activity and cell migration.</title>
        <authorList>
            <person name="Manabe R."/>
            <person name="Kovalenko M."/>
            <person name="Webb D.J."/>
            <person name="Horwitz A.R."/>
        </authorList>
    </citation>
    <scope>FUNCTION</scope>
    <scope>SUBCELLULAR LOCATION</scope>
</reference>
<reference key="8">
    <citation type="journal article" date="2003" name="J. Cell Biol.">
        <title>Synapse formation is regulated by the signaling adaptor GIT1.</title>
        <authorList>
            <person name="Zhang H."/>
            <person name="Webb D.J."/>
            <person name="Asmussen H."/>
            <person name="Horwitz A.F."/>
        </authorList>
    </citation>
    <scope>FUNCTION</scope>
</reference>
<reference key="9">
    <citation type="journal article" date="2004" name="Curr. Biol.">
        <title>Mammalian Scribble forms a tight complex with the betaPIX exchange factor.</title>
        <authorList>
            <person name="Audebert S."/>
            <person name="Navarro C."/>
            <person name="Nourry C."/>
            <person name="Chasserot-Golaz S."/>
            <person name="Lecine P."/>
            <person name="Bellaiche Y."/>
            <person name="Dupont J.-L."/>
            <person name="Premont R.T."/>
            <person name="Sempere C."/>
            <person name="Strub J.-M."/>
            <person name="Van Dorsselaer A."/>
            <person name="Vitale N."/>
            <person name="Borg J.-P."/>
        </authorList>
    </citation>
    <scope>INTERACTION WITH SCRIB</scope>
</reference>
<reference key="10">
    <citation type="journal article" date="2005" name="J. Biol. Chem.">
        <title>GIT1 is a scaffold for ERK1/2 activation in focal adhesions.</title>
        <authorList>
            <person name="Yin G."/>
            <person name="Zheng Q."/>
            <person name="Yan C."/>
            <person name="Berk B.C."/>
        </authorList>
    </citation>
    <scope>FUNCTION</scope>
    <scope>SUBCELLULAR LOCATION</scope>
</reference>
<reference key="11">
    <citation type="journal article" date="2005" name="J. Neurosci.">
        <title>A GIT1/PIX/Rac/PAK signaling module regulates spine morphogenesis and synapse formation through MLC.</title>
        <authorList>
            <person name="Zhang H."/>
            <person name="Webb D.J."/>
            <person name="Asmussen H."/>
            <person name="Niu S."/>
            <person name="Horwitz A.F."/>
        </authorList>
    </citation>
    <scope>FUNCTION</scope>
</reference>
<reference key="12">
    <citation type="journal article" date="2005" name="Nat. Biotechnol.">
        <title>Immunoaffinity profiling of tyrosine phosphorylation in cancer cells.</title>
        <authorList>
            <person name="Rush J."/>
            <person name="Moritz A."/>
            <person name="Lee K.A."/>
            <person name="Guo A."/>
            <person name="Goss V.L."/>
            <person name="Spek E.J."/>
            <person name="Zhang H."/>
            <person name="Zha X.-M."/>
            <person name="Polakiewicz R.D."/>
            <person name="Comb M.J."/>
        </authorList>
    </citation>
    <scope>PHOSPHORYLATION [LARGE SCALE ANALYSIS] AT TYR-554</scope>
    <scope>IDENTIFICATION BY MASS SPECTROMETRY [LARGE SCALE ANALYSIS]</scope>
</reference>
<reference key="13">
    <citation type="journal article" date="2006" name="Cell">
        <title>Global, in vivo, and site-specific phosphorylation dynamics in signaling networks.</title>
        <authorList>
            <person name="Olsen J.V."/>
            <person name="Blagoev B."/>
            <person name="Gnad F."/>
            <person name="Macek B."/>
            <person name="Kumar C."/>
            <person name="Mortensen P."/>
            <person name="Mann M."/>
        </authorList>
    </citation>
    <scope>PHOSPHORYLATION [LARGE SCALE ANALYSIS] AT SER-388 AND SER-592</scope>
    <scope>IDENTIFICATION BY MASS SPECTROMETRY [LARGE SCALE ANALYSIS]</scope>
    <source>
        <tissue>Cervix carcinoma</tissue>
    </source>
</reference>
<reference key="14">
    <citation type="journal article" date="2008" name="Cell">
        <title>Deregulation of scribble promotes mammary tumorigenesis and reveals a role for cell polarity in carcinoma.</title>
        <authorList>
            <person name="Zhan L."/>
            <person name="Rosenberg A."/>
            <person name="Bergami K.C."/>
            <person name="Yu M."/>
            <person name="Xuan Z."/>
            <person name="Jaffe A.B."/>
            <person name="Allred C."/>
            <person name="Muthuswamy S.K."/>
        </authorList>
    </citation>
    <scope>INTERACTION WITH SCRIB</scope>
    <scope>INDUCTION BY MYC</scope>
</reference>
<reference key="15">
    <citation type="journal article" date="2008" name="J. Proteome Res.">
        <title>Phosphoproteome of resting human platelets.</title>
        <authorList>
            <person name="Zahedi R.P."/>
            <person name="Lewandrowski U."/>
            <person name="Wiesner J."/>
            <person name="Wortelkamp S."/>
            <person name="Moebius J."/>
            <person name="Schuetz C."/>
            <person name="Walter U."/>
            <person name="Gambaryan S."/>
            <person name="Sickmann A."/>
        </authorList>
    </citation>
    <scope>PHOSPHORYLATION [LARGE SCALE ANALYSIS] AT SER-388 AND SER-592</scope>
    <scope>IDENTIFICATION BY MASS SPECTROMETRY [LARGE SCALE ANALYSIS]</scope>
    <source>
        <tissue>Platelet</tissue>
    </source>
</reference>
<reference key="16">
    <citation type="journal article" date="2008" name="Proc. Natl. Acad. Sci. U.S.A.">
        <title>A quantitative atlas of mitotic phosphorylation.</title>
        <authorList>
            <person name="Dephoure N."/>
            <person name="Zhou C."/>
            <person name="Villen J."/>
            <person name="Beausoleil S.A."/>
            <person name="Bakalarski C.E."/>
            <person name="Elledge S.J."/>
            <person name="Gygi S.P."/>
        </authorList>
    </citation>
    <scope>PHOSPHORYLATION [LARGE SCALE ANALYSIS] AT SER-362; TYR-383; SER-385; SER-388; THR-392; SER-410; SER-592 AND SER-596</scope>
    <scope>IDENTIFICATION BY MASS SPECTROMETRY [LARGE SCALE ANALYSIS]</scope>
    <source>
        <tissue>Cervix carcinoma</tissue>
    </source>
</reference>
<reference key="17">
    <citation type="journal article" date="2008" name="Proteomics">
        <title>Large-scale phosphoproteome analysis of human liver tissue by enrichment and fractionation of phosphopeptides with strong anion exchange chromatography.</title>
        <authorList>
            <person name="Han G."/>
            <person name="Ye M."/>
            <person name="Zhou H."/>
            <person name="Jiang X."/>
            <person name="Feng S."/>
            <person name="Jiang X."/>
            <person name="Tian R."/>
            <person name="Wan D."/>
            <person name="Zou H."/>
            <person name="Gu J."/>
        </authorList>
    </citation>
    <scope>PHOSPHORYLATION [LARGE SCALE ANALYSIS] AT SER-388</scope>
    <scope>IDENTIFICATION BY MASS SPECTROMETRY [LARGE SCALE ANALYSIS]</scope>
    <source>
        <tissue>Liver</tissue>
    </source>
</reference>
<reference key="18">
    <citation type="journal article" date="2009" name="Anal. Chem.">
        <title>Lys-N and trypsin cover complementary parts of the phosphoproteome in a refined SCX-based approach.</title>
        <authorList>
            <person name="Gauci S."/>
            <person name="Helbig A.O."/>
            <person name="Slijper M."/>
            <person name="Krijgsveld J."/>
            <person name="Heck A.J."/>
            <person name="Mohammed S."/>
        </authorList>
    </citation>
    <scope>IDENTIFICATION BY MASS SPECTROMETRY [LARGE SCALE ANALYSIS]</scope>
</reference>
<reference key="19">
    <citation type="journal article" date="2009" name="Circulation">
        <title>G-protein-coupled receptor kinase interacting protein-1 is required for pulmonary vascular development.</title>
        <authorList>
            <person name="Pang J."/>
            <person name="Hoefen R."/>
            <person name="Pryhuber G.S."/>
            <person name="Wang J."/>
            <person name="Yin G."/>
            <person name="White R.J."/>
            <person name="Xu X."/>
            <person name="O'Dell M.R."/>
            <person name="Mohan A."/>
            <person name="Michaloski H."/>
            <person name="Massett M.P."/>
            <person name="Yan C."/>
            <person name="Berk B.C."/>
        </authorList>
    </citation>
    <scope>FUNCTION</scope>
</reference>
<reference key="20">
    <citation type="journal article" date="2009" name="Sci. Signal.">
        <title>Quantitative phosphoproteomic analysis of T cell receptor signaling reveals system-wide modulation of protein-protein interactions.</title>
        <authorList>
            <person name="Mayya V."/>
            <person name="Lundgren D.H."/>
            <person name="Hwang S.-I."/>
            <person name="Rezaul K."/>
            <person name="Wu L."/>
            <person name="Eng J.K."/>
            <person name="Rodionov V."/>
            <person name="Han D.K."/>
        </authorList>
    </citation>
    <scope>PHOSPHORYLATION [LARGE SCALE ANALYSIS] AT SER-362; THR-364; SER-375; TYR-383; SER-385; SER-388; THR-392; SER-410; TYR-545; SER-592; SER-596 AND THR-601</scope>
    <scope>IDENTIFICATION BY MASS SPECTROMETRY [LARGE SCALE ANALYSIS]</scope>
    <source>
        <tissue>Leukemic T-cell</tissue>
    </source>
</reference>
<reference key="21">
    <citation type="journal article" date="2010" name="Sci. Signal.">
        <title>Quantitative phosphoproteomics reveals widespread full phosphorylation site occupancy during mitosis.</title>
        <authorList>
            <person name="Olsen J.V."/>
            <person name="Vermeulen M."/>
            <person name="Santamaria A."/>
            <person name="Kumar C."/>
            <person name="Miller M.L."/>
            <person name="Jensen L.J."/>
            <person name="Gnad F."/>
            <person name="Cox J."/>
            <person name="Jensen T.S."/>
            <person name="Nigg E.A."/>
            <person name="Brunak S."/>
            <person name="Mann M."/>
        </authorList>
    </citation>
    <scope>PHOSPHORYLATION [LARGE SCALE ANALYSIS] AT THR-364; SER-385; SER-388 AND SER-410</scope>
    <scope>IDENTIFICATION BY MASS SPECTROMETRY [LARGE SCALE ANALYSIS]</scope>
    <source>
        <tissue>Cervix carcinoma</tissue>
    </source>
</reference>
<reference key="22">
    <citation type="journal article" date="2011" name="BMC Syst. Biol.">
        <title>Initial characterization of the human central proteome.</title>
        <authorList>
            <person name="Burkard T.R."/>
            <person name="Planyavsky M."/>
            <person name="Kaupe I."/>
            <person name="Breitwieser F.P."/>
            <person name="Buerckstuemmer T."/>
            <person name="Bennett K.L."/>
            <person name="Superti-Furga G."/>
            <person name="Colinge J."/>
        </authorList>
    </citation>
    <scope>IDENTIFICATION BY MASS SPECTROMETRY [LARGE SCALE ANALYSIS]</scope>
</reference>
<reference key="23">
    <citation type="journal article" date="2011" name="Sci. Signal.">
        <title>System-wide temporal characterization of the proteome and phosphoproteome of human embryonic stem cell differentiation.</title>
        <authorList>
            <person name="Rigbolt K.T."/>
            <person name="Prokhorova T.A."/>
            <person name="Akimov V."/>
            <person name="Henningsen J."/>
            <person name="Johansen P.T."/>
            <person name="Kratchmarova I."/>
            <person name="Kassem M."/>
            <person name="Mann M."/>
            <person name="Olsen J.V."/>
            <person name="Blagoev B."/>
        </authorList>
    </citation>
    <scope>PHOSPHORYLATION [LARGE SCALE ANALYSIS] AT SER-362 AND SER-388</scope>
    <scope>IDENTIFICATION BY MASS SPECTROMETRY [LARGE SCALE ANALYSIS]</scope>
</reference>
<reference key="24">
    <citation type="journal article" date="2013" name="J. Proteome Res.">
        <title>Toward a comprehensive characterization of a human cancer cell phosphoproteome.</title>
        <authorList>
            <person name="Zhou H."/>
            <person name="Di Palma S."/>
            <person name="Preisinger C."/>
            <person name="Peng M."/>
            <person name="Polat A.N."/>
            <person name="Heck A.J."/>
            <person name="Mohammed S."/>
        </authorList>
    </citation>
    <scope>PHOSPHORYLATION [LARGE SCALE ANALYSIS] AT SER-362; THR-364; SER-370; SER-388; SER-498; SER-592 AND SER-596</scope>
    <scope>IDENTIFICATION BY MASS SPECTROMETRY [LARGE SCALE ANALYSIS]</scope>
    <source>
        <tissue>Cervix carcinoma</tissue>
        <tissue>Erythroleukemia</tissue>
    </source>
</reference>
<reference key="25">
    <citation type="journal article" date="2013" name="Oncogene">
        <title>The serologically defined colon cancer antigen-3 interacts with the protein tyrosine phosphatase PTPN13 and is involved in the regulation of cytokinesis.</title>
        <authorList>
            <person name="Hagemann N."/>
            <person name="Ackermann N."/>
            <person name="Christmann J."/>
            <person name="Brier S."/>
            <person name="Yu F."/>
            <person name="Erdmann K.S."/>
        </authorList>
    </citation>
    <scope>FUNCTION</scope>
    <scope>INTERACTION WITH ENTR1 AND PTPN13</scope>
    <scope>SUBCELLULAR LOCATION</scope>
    <scope>MUTAGENESIS OF ARG-39</scope>
</reference>
<reference key="26">
    <citation type="journal article" date="2014" name="Cell Rep.">
        <title>GIT1 and betaPIX are essential for GABA(A) receptor synaptic stability and inhibitory neurotransmission.</title>
        <authorList>
            <person name="Smith K.R."/>
            <person name="Davenport E.C."/>
            <person name="Wei J."/>
            <person name="Li X."/>
            <person name="Pathania M."/>
            <person name="Vaccaro V."/>
            <person name="Yan Z."/>
            <person name="Kittler J.T."/>
        </authorList>
    </citation>
    <scope>FUNCTION</scope>
</reference>
<reference key="27">
    <citation type="journal article" date="2014" name="J. Proteomics">
        <title>An enzyme assisted RP-RPLC approach for in-depth analysis of human liver phosphoproteome.</title>
        <authorList>
            <person name="Bian Y."/>
            <person name="Song C."/>
            <person name="Cheng K."/>
            <person name="Dong M."/>
            <person name="Wang F."/>
            <person name="Huang J."/>
            <person name="Sun D."/>
            <person name="Wang L."/>
            <person name="Ye M."/>
            <person name="Zou H."/>
        </authorList>
    </citation>
    <scope>PHOSPHORYLATION [LARGE SCALE ANALYSIS] AT SER-388; THR-480 AND SER-592</scope>
    <scope>IDENTIFICATION BY MASS SPECTROMETRY [LARGE SCALE ANALYSIS]</scope>
    <source>
        <tissue>Liver</tissue>
    </source>
</reference>
<reference key="28">
    <citation type="journal article" date="2016" name="Biochim. Biophys. Acta">
        <title>GIT1/betaPIX signaling proteins and PAK1 kinase regulate microtubule nucleation.</title>
        <authorList>
            <person name="Cernohorska M."/>
            <person name="Sulimenko V."/>
            <person name="Hajkova Z."/>
            <person name="Sulimenko T."/>
            <person name="Sladkova V."/>
            <person name="Vinopal S."/>
            <person name="Draberova E."/>
            <person name="Draber P."/>
        </authorList>
    </citation>
    <scope>FUNCTION</scope>
    <scope>INTERACTION WITH ARHGEF7; GAMMA-TUBULIN; PAK1 AND PXN</scope>
    <scope>SUBCELLULAR LOCATION</scope>
    <scope>PHOSPHORYLATION</scope>
</reference>
<reference key="29">
    <citation type="journal article" date="2019" name="Cell Prolif.">
        <title>GIT1 regulates angiogenic factor secretion in bone marrow mesenchymal stem cells via NF-kappaB/Notch signalling to promote angiogenesis.</title>
        <authorList>
            <person name="Li L."/>
            <person name="Tang P."/>
            <person name="Zhou Z."/>
            <person name="Wang Q."/>
            <person name="Xu T."/>
            <person name="Zhao S."/>
            <person name="Huang Y."/>
            <person name="Kong F."/>
            <person name="Liu W."/>
            <person name="Cheng L."/>
            <person name="Zhou Z."/>
            <person name="Zhao X."/>
            <person name="Gu C."/>
            <person name="Luo Y."/>
            <person name="Tao G."/>
            <person name="Qian D."/>
            <person name="Chen J."/>
            <person name="Fan J."/>
            <person name="Yin G."/>
        </authorList>
    </citation>
    <scope>FUNCTION</scope>
    <scope>INTERACTION WITH IKBKG</scope>
</reference>
<sequence length="761" mass="84341">MSRKGPRAEVCADCSAPDPGWASISRGVLVCDECCSVHRSLGRHISIVKHLRHSAWPPTLLQMVHTLASNGANSIWEHSLLDPAQVQSGRRKANPQDKVHPIKSEFIRAKYQMLAFVHKLPCRDDDGVTAKDLSKQLHSSVRTGNLETCLRLLSLGAQANFFHPEKGTTPLHVAAKAGQTLQAELLVVYGADPGSPDVNGRTPIDYARQAGHHELAERLVECQYELTDRLAFYLCGRKPDHKNGHYIIPQMADSLDLSELAKAAKKKLQALSNRLFEELAMDVYDEVDRRENDAVWLATQNHSTLVTERSAVPFLPVNPEYSATRNQGRQKLARFNAREFATLIIDILSEAKRRQQGKSLSSPTDNLELSLRSQSDLDDQHDYDSVASDEDTDQEPLRSTGATRSNRARSMDSSDLSDGAVTLQEYLELKKALATSEAKVQQLMKVNSSLSDELRRLQREIHKLQAENLQLRQPPGPVPTPPLPSERAEHTPMAPGGSTHRRDRQAFSMYEPGSALKPFGGPPGDELTTRLQPFHSTELEDDAIYSVHVPAGLYRIRKGVSASAVPFTPSSPLLSCSQEGSRHTSKLSRHGSGADSDYENTQSGDPLLGLEGKRFLELGKEEDFHPELESLDGDLDPGLPSTEDVILKTEQVTKNIQELLRAAQEFKHDSFVPCSEKIHLAVTEMASLFPKRPALEPVRSSLRLLNASAYRLQSECRKTVPPEPGAPVDFQLLTQQVIQCAYDIAKAAKQLVTITTREKKQ</sequence>
<accession>Q9Y2X7</accession>
<accession>B4DGU9</accession>
<accession>B4DSV3</accession>
<accession>Q86SS0</accession>
<accession>Q9BRJ4</accession>
<proteinExistence type="evidence at protein level"/>
<gene>
    <name type="primary">GIT1</name>
</gene>
<protein>
    <recommendedName>
        <fullName>ARF GTPase-activating protein GIT1</fullName>
        <shortName>ARF GAP GIT1</shortName>
    </recommendedName>
    <alternativeName>
        <fullName>Cool-associated and tyrosine-phosphorylated protein 1</fullName>
        <shortName>CAT-1</shortName>
        <shortName>CAT1</shortName>
    </alternativeName>
    <alternativeName>
        <fullName>G protein-coupled receptor kinase-interactor 1</fullName>
    </alternativeName>
    <alternativeName>
        <fullName>GRK-interacting protein 1</fullName>
    </alternativeName>
    <alternativeName>
        <fullName evidence="21">p95-APP1</fullName>
    </alternativeName>
</protein>
<comment type="function">
    <text evidence="1 2 7 8 10 12 13 15 16 17 18 19">GTPase-activating protein for ADP ribosylation factor family members, including ARF1. Multidomain scaffold protein that interacts with numerous proteins and therefore participates in many cellular functions, including receptor internalization, focal adhesion remodeling, and signaling by both G protein-coupled receptors and tyrosine kinase receptors (By similarity). Through PAK1 activation, positively regulates microtubule nucleation during interphase (PubMed:27012601). Plays a role in the regulation of cytokinesis; for this function, may act in a pathway also involving ENTR1 and PTPN13 (PubMed:23108400). May promote cell motility both by regulating focal complex dynamics and by local activation of RAC1 (PubMed:10938112, PubMed:11896197). May act as scaffold for MAPK1/3 signal transduction in focal adhesions. Recruits MAPK1/3/ERK1/2 to focal adhesions after EGF stimulation via a Src-dependent pathway, hence stimulating cell migration (PubMed:15923189). Plays a role in brain development and function. Involved in the regulation of spine density and synaptic plasticity that is required for processes involved in learning (By similarity). Plays an important role in dendritic spine morphogenesis and synapse formation (PubMed:12695502, PubMed:15800193). In hippocampal neurons, recruits guanine nucleotide exchange factors (GEFs), such as ARHGEF7/beta-PIX, to the synaptic membrane. These in turn locally activate RAC1, which is an essential step for spine morphogenesis and synapse formation (PubMed:12695502). May contribute to the organization of presynaptic active zones through oligomerization and formation of a Piccolo/PCLO-based protein network, which includes ARHGEF7/beta-PIX and FAK1 (By similarity). In neurons, through its interaction with liprin-alpha family members, may be required for AMPA receptor (GRIA2/3) proper targeting to the cell membrane (By similarity). In complex with GABA(A) receptors and ARHGEF7, plays a crucial role in regulating GABA(A) receptor synaptic stability, maintaining GPHN/gephyrin scaffolds and hence GABAergic inhibitory synaptic transmission, by locally coordinating RAC1 and PAK1 downstream effector activity, leading to F-actin stabilization (PubMed:25284783). May also be important for RAC1 downstream signaling pathway through PAK3 and regulation of neuronal inhibitory transmission at presynaptic input (By similarity). Required for successful bone regeneration during fracture healing (By similarity). The function in intramembranous ossification may, at least partly, exerted by macrophages in which GIT1 is a key negative regulator of redox homeostasis, IL1B production, and glycolysis, acting through the ERK1/2/NRF2/NFE2L2 axis (By similarity). May play a role in angiogenesis during fracture healing (By similarity). In this process, may regulate activation of the canonical NF-kappa-B signal in bone mesenchymal stem cells by enhancing the interaction between NEMO and 'Lys-63'-ubiquitinated RIPK1/RIP1, eventually leading to enhanced production of VEGFA and others angiogenic factors (PubMed:31502302). Essential for VEGF signaling through the activation of phospholipase C-gamma and ERK1/2, hence may control endothelial cell proliferation and angiogenesis (PubMed:19273721).</text>
</comment>
<comment type="subunit">
    <text evidence="1 2 6 7 9 11 14 16 18 19">Forms homodimers and possibly oligomers (By similarity). May forms heterooligomers with GIT2 (By similarity). Interacts with G protein-coupled receptor kinases, including GRK2, GRK3, GRK5 and GRK6 (By similarity). Interacts with PPFIA1, PPFIA2 and PPFIA4 (By similarity). Interacts with GRIP1 and forms a ternary complex with PPFIA1 and GRIP1 (By similarity). Directly interacts with ARHGEF7/beta-PIX, forming in vitro a heptameric complex made of a GIT1 dimer and an ARHGEF7 trimer (PubMed:10896954, PubMed:27012601). Directly interacts with PXN/paxillin; this interaction is enhanced in the presence of ARHGEF7 (PubMed:10896954, PubMed:10938112, PubMed:27012601). Directly interacts (via C-terminus) with TGFB1I1/Hic-5 (via LD motif 3) (PubMed:12153727). Directly interacts with PTK2/FAK1 (By similarity). May interact with PTK2B/PYK2; this interaction may be indirect (By similarity). Interacts with AMPA receptors GRIA2/3 (By similarity). Directly interacts with protein Piccolo/PCLO (By similarity). Forms a complex with Ephrin-B1/EFNB1 and NCK2/GRB4 (via SH2); this interaction is important for spine morphogenesis and synapse formation. Interaction with NCK2 is transient and depends upon GIT1 phosphorylation at Tyr-383 (By similarity). Interacts with GRIN3A/GluN3A (via C-terminus); this interaction competes with GIT1 interaction with ARHGEF7 and limits synaptic localization of GIT1 (By similarity). Interacts with IKBKG/NEMO in resting bone mesenchymal stem cells, as well as in TNF-stimulated cells; this interaction may increase IKBKG affinity for 'Lys-63'-linked polyubiquitin chains (PubMed:31502302). Interacts with GABA(A) receptors, including GABRB3 and GABRG2 (By similarity). Interacts with SCRIB (PubMed:15182672, PubMed:19041750). Interacts (via N- and C-terminus) with ENTR1/SDCCAG3 (via N-terminus); this interaction is direct (PubMed:23108400). May form a tripartite complex with ENTR1 and PTPN13 (PubMed:23108400). Interacts with YWHAZ (By similarity). Interacts with PAK1 (PubMed:27012601). Interacts with PAK3 (PubMed:10896954). Directly interacts (via N-terminus) with gamma-tubulin (PubMed:27012601). Interacts with MAPK1 and MAPK3; this interaction is required for MAPK1/3 recruitment to focal adhesions (By similarity).</text>
</comment>
<comment type="interaction">
    <interactant intactId="EBI-466061">
        <id>Q9Y2X7</id>
    </interactant>
    <interactant intactId="EBI-1642523">
        <id>Q15052</id>
        <label>ARHGEF6</label>
    </interactant>
    <organismsDiffer>false</organismsDiffer>
    <experiments>3</experiments>
</comment>
<comment type="interaction">
    <interactant intactId="EBI-466061">
        <id>Q9Y2X7</id>
    </interactant>
    <interactant intactId="EBI-717515">
        <id>Q14155</id>
        <label>ARHGEF7</label>
    </interactant>
    <organismsDiffer>false</organismsDiffer>
    <experiments>8</experiments>
</comment>
<comment type="interaction">
    <interactant intactId="EBI-466061">
        <id>Q9Y2X7</id>
    </interactant>
    <interactant intactId="EBI-473181">
        <id>Q99728</id>
        <label>BARD1</label>
    </interactant>
    <organismsDiffer>false</organismsDiffer>
    <experiments>2</experiments>
</comment>
<comment type="interaction">
    <interactant intactId="EBI-466061">
        <id>Q9Y2X7</id>
    </interactant>
    <interactant intactId="EBI-473176">
        <id>Q9P2H0</id>
        <label>CEP126</label>
    </interactant>
    <organismsDiffer>false</organismsDiffer>
    <experiments>2</experiments>
</comment>
<comment type="interaction">
    <interactant intactId="EBI-466061">
        <id>Q9Y2X7</id>
    </interactant>
    <interactant intactId="EBI-523590">
        <id>Q12873</id>
        <label>CHD3</label>
    </interactant>
    <organismsDiffer>false</organismsDiffer>
    <experiments>2</experiments>
</comment>
<comment type="interaction">
    <interactant intactId="EBI-466061">
        <id>Q9Y2X7</id>
    </interactant>
    <interactant intactId="EBI-1046878">
        <id>Q14161</id>
        <label>GIT2</label>
    </interactant>
    <organismsDiffer>false</organismsDiffer>
    <experiments>2</experiments>
</comment>
<comment type="interaction">
    <interactant intactId="EBI-466061">
        <id>Q9Y2X7</id>
    </interactant>
    <interactant intactId="EBI-401755">
        <id>P62993</id>
        <label>GRB2</label>
    </interactant>
    <organismsDiffer>false</organismsDiffer>
    <experiments>4</experiments>
</comment>
<comment type="interaction">
    <interactant intactId="EBI-466061">
        <id>Q9Y2X7</id>
    </interactant>
    <interactant intactId="EBI-3904795">
        <id>P25098</id>
        <label>GRK2</label>
    </interactant>
    <organismsDiffer>false</organismsDiffer>
    <experiments>5</experiments>
</comment>
<comment type="interaction">
    <interactant intactId="EBI-466061">
        <id>Q9Y2X7</id>
    </interactant>
    <interactant intactId="EBI-466029">
        <id>P42858</id>
        <label>HTT</label>
    </interactant>
    <organismsDiffer>false</organismsDiffer>
    <experiments>10</experiments>
</comment>
<comment type="interaction">
    <interactant intactId="EBI-466061">
        <id>Q9Y2X7</id>
    </interactant>
    <interactant intactId="EBI-473196">
        <id>Q5T3J3</id>
        <label>LRIF1</label>
    </interactant>
    <organismsDiffer>false</organismsDiffer>
    <experiments>2</experiments>
</comment>
<comment type="interaction">
    <interactant intactId="EBI-466061">
        <id>Q9Y2X7</id>
    </interactant>
    <interactant intactId="EBI-1307">
        <id>Q13153</id>
        <label>PAK1</label>
    </interactant>
    <organismsDiffer>false</organismsDiffer>
    <experiments>5</experiments>
</comment>
<comment type="interaction">
    <interactant intactId="EBI-466061">
        <id>Q9Y2X7</id>
    </interactant>
    <interactant intactId="EBI-356919">
        <id>O60925</id>
        <label>PFDN1</label>
    </interactant>
    <organismsDiffer>false</organismsDiffer>
    <experiments>4</experiments>
</comment>
<comment type="interaction">
    <interactant intactId="EBI-466061">
        <id>Q9Y2X7</id>
    </interactant>
    <interactant intactId="EBI-702209">
        <id>P49023</id>
        <label>PXN</label>
    </interactant>
    <organismsDiffer>false</organismsDiffer>
    <experiments>3</experiments>
</comment>
<comment type="interaction">
    <interactant intactId="EBI-466061">
        <id>Q9Y2X7</id>
    </interactant>
    <interactant intactId="EBI-2896280">
        <id>P49024</id>
        <label>PXN</label>
    </interactant>
    <organismsDiffer>true</organismsDiffer>
    <experiments>3</experiments>
</comment>
<comment type="subcellular location">
    <subcellularLocation>
        <location evidence="8">Cytoplasm</location>
    </subcellularLocation>
    <subcellularLocation>
        <location evidence="10">Synapse</location>
    </subcellularLocation>
    <subcellularLocation>
        <location evidence="2">Presynapse</location>
    </subcellularLocation>
    <subcellularLocation>
        <location evidence="2">Postsynapse</location>
    </subcellularLocation>
    <subcellularLocation>
        <location evidence="2">Postsynaptic density</location>
    </subcellularLocation>
    <subcellularLocation>
        <location evidence="7 8 13">Cell junction</location>
        <location evidence="7 8 13">Focal adhesion</location>
    </subcellularLocation>
    <subcellularLocation>
        <location evidence="8">Cell projection</location>
        <location evidence="8">Lamellipodium</location>
    </subcellularLocation>
    <subcellularLocation>
        <location evidence="16 18">Cytoplasm</location>
        <location evidence="16 18">Cytoskeleton</location>
        <location evidence="16 18">Microtubule organizing center</location>
        <location evidence="16 18">Centrosome</location>
    </subcellularLocation>
    <subcellularLocation>
        <location evidence="18">Cytoplasm</location>
        <location evidence="18">Cytoskeleton</location>
        <location evidence="18">Spindle pole</location>
    </subcellularLocation>
    <text evidence="2 8 18">Cycles between at least 3 distinct intracellular compartments, including focal adhesions, cytosolic complexes, containing at least PXN/paxillin, ARHGEF7 and PAK1, and membrane protrusions. During cell migration, moves from the disassembling adhesions into the cytosol and towards the leading edge. In adherent cells, localizes to adhesions. Recruitment to adhesions may be mediated by RAC and active tyrosine-phosphorylated PXN (PubMed:11896197). May be present in both excitatory and inhibitory synapses. In hippocampal neurons, recruitment of GIT1 to synapses is regulated by ephrinB activation and ephrinB downstream effector GRB4/NCK2. In hippocampal neurons, partially colocalizes with PCLO (By similarity). Interaction with GRIN3A limits GIT1 synaptic localization (By similarity). Localization to the centrosome does not depend upon the presence of gamma-tubulin (PubMed:27012601).</text>
</comment>
<comment type="alternative products">
    <event type="alternative splicing"/>
    <isoform>
        <id>Q9Y2X7-1</id>
        <name>1</name>
        <sequence type="displayed"/>
    </isoform>
    <isoform>
        <id>Q9Y2X7-2</id>
        <name>2</name>
        <sequence type="described" ref="VSP_009666 VSP_009667"/>
    </isoform>
    <isoform>
        <id>Q9Y2X7-3</id>
        <name>3</name>
        <sequence type="described" ref="VSP_040984"/>
    </isoform>
</comment>
<comment type="induction">
    <text evidence="14">Up-regulated at the transcriptional level by MYC.</text>
</comment>
<comment type="domain">
    <text evidence="2">The coiled coil region mediates dimerization.</text>
</comment>
<comment type="PTM">
    <text evidence="2 18">Phosphorylated by PAK1 (PubMed:27012601). Phosphorylation on tyrosine residues may be catalyzed by PTK2/FAK1 and SRC in growing fibroblasts. Phosphorylation at Tyr-383 is induced by activation of Ephrin-B1/EFNB1 and catalyzed by SRC family kinases. It is required for the interaction with NCK2 and for GIT1 recruitment to synapses in hippocampal neurons (By similarity).</text>
</comment>
<comment type="sequence caution" evidence="23">
    <conflict type="erroneous initiation">
        <sequence resource="EMBL-CDS" id="AAH48196"/>
    </conflict>
    <text>Extended N-terminus.</text>
</comment>